<feature type="chain" id="PRO_0000200224" description="Homeobox protein Hox-D9">
    <location>
        <begin position="1"/>
        <end position="265"/>
    </location>
</feature>
<feature type="DNA-binding region" description="Homeobox" evidence="2">
    <location>
        <begin position="198"/>
        <end position="257"/>
    </location>
</feature>
<feature type="region of interest" description="Disordered" evidence="3">
    <location>
        <begin position="163"/>
        <end position="188"/>
    </location>
</feature>
<organism>
    <name type="scientific">Heterodontus francisci</name>
    <name type="common">Horn shark</name>
    <name type="synonym">Cestracion francisci</name>
    <dbReference type="NCBI Taxonomy" id="7792"/>
    <lineage>
        <taxon>Eukaryota</taxon>
        <taxon>Metazoa</taxon>
        <taxon>Chordata</taxon>
        <taxon>Craniata</taxon>
        <taxon>Vertebrata</taxon>
        <taxon>Chondrichthyes</taxon>
        <taxon>Elasmobranchii</taxon>
        <taxon>Galeomorphii</taxon>
        <taxon>Heterodontoidea</taxon>
        <taxon>Heterodontiformes</taxon>
        <taxon>Heterodontidae</taxon>
        <taxon>Heterodontus</taxon>
    </lineage>
</organism>
<name>HXD9_HETFR</name>
<protein>
    <recommendedName>
        <fullName>Homeobox protein Hox-D9</fullName>
    </recommendedName>
</protein>
<comment type="function">
    <text evidence="1">Sequence-specific transcription factor which is part of a developmental regulatory system that provides cells with specific positional identities on the anterior-posterior axis.</text>
</comment>
<comment type="subcellular location">
    <subcellularLocation>
        <location evidence="2">Nucleus</location>
    </subcellularLocation>
</comment>
<comment type="similarity">
    <text evidence="4">Belongs to the Abd-B homeobox family.</text>
</comment>
<proteinExistence type="inferred from homology"/>
<keyword id="KW-0217">Developmental protein</keyword>
<keyword id="KW-0238">DNA-binding</keyword>
<keyword id="KW-0371">Homeobox</keyword>
<keyword id="KW-0539">Nucleus</keyword>
<keyword id="KW-0804">Transcription</keyword>
<keyword id="KW-0805">Transcription regulation</keyword>
<reference key="1">
    <citation type="journal article" date="2000" name="Proc. Natl. Acad. Sci. U.S.A.">
        <title>Hox cluster genomics in the horn shark, Heterodontus francisci.</title>
        <authorList>
            <person name="Kim C.B."/>
            <person name="Amemiya C."/>
            <person name="Bailey W."/>
            <person name="Kawasaki K."/>
            <person name="Mezey J."/>
            <person name="Miller W."/>
            <person name="Minoshima S."/>
            <person name="Shimizu N."/>
            <person name="Wagner G."/>
            <person name="Ruddle F."/>
        </authorList>
    </citation>
    <scope>NUCLEOTIDE SEQUENCE [GENOMIC DNA]</scope>
</reference>
<sequence length="265" mass="30366">MSTGGTIHNYYVDSLIGQETEDLYAARYAQGSHSTASRPSGVADSSDFSSCSFTSKSTAFSNPWSPVHPQSSAAVAGIYHPYMHQSHLAAGDTRYVRSWLEPLSSSVSFPGFHPNGRHYGIKPETLSSKRTECSSYELQTLSLPEFTCGSYPECREKLPKELGCTSSETTSNSEHKEEKQQQLDPNHPAINWIHARSTRKKRCPYTKYQTLELEKEFLFNMYLTRDRRYEVARILNLTERQVKIWFQNRRMKMKKMNKVKNNEEP</sequence>
<accession>Q9IA13</accession>
<dbReference type="EMBL" id="AF224263">
    <property type="protein sequence ID" value="AAF44633.1"/>
    <property type="molecule type" value="Genomic_DNA"/>
</dbReference>
<dbReference type="BMRB" id="Q9IA13"/>
<dbReference type="SMR" id="Q9IA13"/>
<dbReference type="GO" id="GO:0005634">
    <property type="term" value="C:nucleus"/>
    <property type="evidence" value="ECO:0007669"/>
    <property type="project" value="UniProtKB-SubCell"/>
</dbReference>
<dbReference type="GO" id="GO:0000981">
    <property type="term" value="F:DNA-binding transcription factor activity, RNA polymerase II-specific"/>
    <property type="evidence" value="ECO:0007669"/>
    <property type="project" value="InterPro"/>
</dbReference>
<dbReference type="GO" id="GO:0000978">
    <property type="term" value="F:RNA polymerase II cis-regulatory region sequence-specific DNA binding"/>
    <property type="evidence" value="ECO:0007669"/>
    <property type="project" value="TreeGrafter"/>
</dbReference>
<dbReference type="GO" id="GO:0009952">
    <property type="term" value="P:anterior/posterior pattern specification"/>
    <property type="evidence" value="ECO:0007669"/>
    <property type="project" value="TreeGrafter"/>
</dbReference>
<dbReference type="GO" id="GO:0006351">
    <property type="term" value="P:DNA-templated transcription"/>
    <property type="evidence" value="ECO:0007669"/>
    <property type="project" value="InterPro"/>
</dbReference>
<dbReference type="GO" id="GO:0048704">
    <property type="term" value="P:embryonic skeletal system morphogenesis"/>
    <property type="evidence" value="ECO:0007669"/>
    <property type="project" value="TreeGrafter"/>
</dbReference>
<dbReference type="GO" id="GO:0009954">
    <property type="term" value="P:proximal/distal pattern formation"/>
    <property type="evidence" value="ECO:0007669"/>
    <property type="project" value="TreeGrafter"/>
</dbReference>
<dbReference type="CDD" id="cd00086">
    <property type="entry name" value="homeodomain"/>
    <property type="match status" value="1"/>
</dbReference>
<dbReference type="FunFam" id="1.10.10.60:FF:000018">
    <property type="entry name" value="Homeobox A10"/>
    <property type="match status" value="1"/>
</dbReference>
<dbReference type="Gene3D" id="1.10.10.60">
    <property type="entry name" value="Homeodomain-like"/>
    <property type="match status" value="1"/>
</dbReference>
<dbReference type="InterPro" id="IPR050803">
    <property type="entry name" value="Abd-B_homeobox_TF"/>
</dbReference>
<dbReference type="InterPro" id="IPR001356">
    <property type="entry name" value="HD"/>
</dbReference>
<dbReference type="InterPro" id="IPR020479">
    <property type="entry name" value="HD_metazoa"/>
</dbReference>
<dbReference type="InterPro" id="IPR017970">
    <property type="entry name" value="Homeobox_CS"/>
</dbReference>
<dbReference type="InterPro" id="IPR009057">
    <property type="entry name" value="Homeodomain-like_sf"/>
</dbReference>
<dbReference type="InterPro" id="IPR006711">
    <property type="entry name" value="Hox9_activation_N"/>
</dbReference>
<dbReference type="InterPro" id="IPR017112">
    <property type="entry name" value="HXA9/HXB9/HXC9"/>
</dbReference>
<dbReference type="PANTHER" id="PTHR45970">
    <property type="entry name" value="AGAP004664-PA"/>
    <property type="match status" value="1"/>
</dbReference>
<dbReference type="PANTHER" id="PTHR45970:SF4">
    <property type="entry name" value="HOMEOBOX PROTEIN HOX-D9"/>
    <property type="match status" value="1"/>
</dbReference>
<dbReference type="Pfam" id="PF00046">
    <property type="entry name" value="Homeodomain"/>
    <property type="match status" value="1"/>
</dbReference>
<dbReference type="Pfam" id="PF04617">
    <property type="entry name" value="Hox9_act"/>
    <property type="match status" value="1"/>
</dbReference>
<dbReference type="PIRSF" id="PIRSF037109">
    <property type="entry name" value="Homeobox_Hox9"/>
    <property type="match status" value="1"/>
</dbReference>
<dbReference type="PRINTS" id="PR00024">
    <property type="entry name" value="HOMEOBOX"/>
</dbReference>
<dbReference type="SMART" id="SM00389">
    <property type="entry name" value="HOX"/>
    <property type="match status" value="1"/>
</dbReference>
<dbReference type="SUPFAM" id="SSF46689">
    <property type="entry name" value="Homeodomain-like"/>
    <property type="match status" value="1"/>
</dbReference>
<dbReference type="PROSITE" id="PS00027">
    <property type="entry name" value="HOMEOBOX_1"/>
    <property type="match status" value="1"/>
</dbReference>
<dbReference type="PROSITE" id="PS50071">
    <property type="entry name" value="HOMEOBOX_2"/>
    <property type="match status" value="1"/>
</dbReference>
<evidence type="ECO:0000250" key="1"/>
<evidence type="ECO:0000255" key="2">
    <source>
        <dbReference type="PROSITE-ProRule" id="PRU00108"/>
    </source>
</evidence>
<evidence type="ECO:0000256" key="3">
    <source>
        <dbReference type="SAM" id="MobiDB-lite"/>
    </source>
</evidence>
<evidence type="ECO:0000305" key="4"/>
<gene>
    <name type="primary">HOXD9</name>
</gene>